<reference key="1">
    <citation type="journal article" date="2002" name="Nat. Genet.">
        <title>Genome sequence of the endocellular obligate symbiont of tsetse flies, Wigglesworthia glossinidia.</title>
        <authorList>
            <person name="Akman L."/>
            <person name="Yamashita A."/>
            <person name="Watanabe H."/>
            <person name="Oshima K."/>
            <person name="Shiba T."/>
            <person name="Hattori M."/>
            <person name="Aksoy S."/>
        </authorList>
    </citation>
    <scope>NUCLEOTIDE SEQUENCE [LARGE SCALE GENOMIC DNA]</scope>
</reference>
<gene>
    <name evidence="2" type="primary">rpsL</name>
    <name type="ordered locus">WIGBR0270</name>
</gene>
<name>RS12_WIGBR</name>
<organism>
    <name type="scientific">Wigglesworthia glossinidia brevipalpis</name>
    <dbReference type="NCBI Taxonomy" id="36870"/>
    <lineage>
        <taxon>Bacteria</taxon>
        <taxon>Pseudomonadati</taxon>
        <taxon>Pseudomonadota</taxon>
        <taxon>Gammaproteobacteria</taxon>
        <taxon>Enterobacterales</taxon>
        <taxon>Erwiniaceae</taxon>
        <taxon>Wigglesworthia</taxon>
    </lineage>
</organism>
<feature type="chain" id="PRO_0000146354" description="Small ribosomal subunit protein uS12">
    <location>
        <begin position="1"/>
        <end position="125"/>
    </location>
</feature>
<feature type="modified residue" description="3-methylthioaspartic acid" evidence="1">
    <location>
        <position position="89"/>
    </location>
</feature>
<evidence type="ECO:0000250" key="1"/>
<evidence type="ECO:0000255" key="2">
    <source>
        <dbReference type="HAMAP-Rule" id="MF_00403"/>
    </source>
</evidence>
<evidence type="ECO:0000305" key="3"/>
<proteinExistence type="inferred from homology"/>
<protein>
    <recommendedName>
        <fullName evidence="2">Small ribosomal subunit protein uS12</fullName>
    </recommendedName>
    <alternativeName>
        <fullName evidence="3">30S ribosomal protein S12</fullName>
    </alternativeName>
</protein>
<comment type="function">
    <text evidence="2">With S4 and S5 plays an important role in translational accuracy.</text>
</comment>
<comment type="function">
    <text evidence="2">Interacts with and stabilizes bases of the 16S rRNA that are involved in tRNA selection in the A site and with the mRNA backbone. Located at the interface of the 30S and 50S subunits, it traverses the body of the 30S subunit contacting proteins on the other side and probably holding the rRNA structure together. The combined cluster of proteins S8, S12 and S17 appears to hold together the shoulder and platform of the 30S subunit.</text>
</comment>
<comment type="subunit">
    <text evidence="2">Part of the 30S ribosomal subunit. Contacts proteins S8 and S17. May interact with IF1 in the 30S initiation complex.</text>
</comment>
<comment type="similarity">
    <text evidence="2">Belongs to the universal ribosomal protein uS12 family.</text>
</comment>
<sequence>MVTINQLVRKSRSNKIIKTNVPALSSCPQKRGVCIRVYTTTPKKPNSALRKVCRVRLTNGFEVTSYIGGEGHNLQEHSSVLIRGGRVKDLPGVRYHIVRGALDCAGVKNRKKARSKYGVKKIKNK</sequence>
<dbReference type="EMBL" id="BA000021">
    <property type="protein sequence ID" value="BAC24173.1"/>
    <property type="molecule type" value="Genomic_DNA"/>
</dbReference>
<dbReference type="SMR" id="Q8D3H4"/>
<dbReference type="STRING" id="36870.gene:10368505"/>
<dbReference type="KEGG" id="wbr:rpsL"/>
<dbReference type="eggNOG" id="COG0048">
    <property type="taxonomic scope" value="Bacteria"/>
</dbReference>
<dbReference type="HOGENOM" id="CLU_104295_1_2_6"/>
<dbReference type="OrthoDB" id="9802366at2"/>
<dbReference type="Proteomes" id="UP000000562">
    <property type="component" value="Chromosome"/>
</dbReference>
<dbReference type="GO" id="GO:0015935">
    <property type="term" value="C:small ribosomal subunit"/>
    <property type="evidence" value="ECO:0007669"/>
    <property type="project" value="InterPro"/>
</dbReference>
<dbReference type="GO" id="GO:0019843">
    <property type="term" value="F:rRNA binding"/>
    <property type="evidence" value="ECO:0007669"/>
    <property type="project" value="UniProtKB-UniRule"/>
</dbReference>
<dbReference type="GO" id="GO:0003735">
    <property type="term" value="F:structural constituent of ribosome"/>
    <property type="evidence" value="ECO:0007669"/>
    <property type="project" value="InterPro"/>
</dbReference>
<dbReference type="GO" id="GO:0000049">
    <property type="term" value="F:tRNA binding"/>
    <property type="evidence" value="ECO:0007669"/>
    <property type="project" value="UniProtKB-UniRule"/>
</dbReference>
<dbReference type="GO" id="GO:0006412">
    <property type="term" value="P:translation"/>
    <property type="evidence" value="ECO:0007669"/>
    <property type="project" value="UniProtKB-UniRule"/>
</dbReference>
<dbReference type="CDD" id="cd03368">
    <property type="entry name" value="Ribosomal_S12"/>
    <property type="match status" value="1"/>
</dbReference>
<dbReference type="FunFam" id="2.40.50.140:FF:000001">
    <property type="entry name" value="30S ribosomal protein S12"/>
    <property type="match status" value="1"/>
</dbReference>
<dbReference type="Gene3D" id="2.40.50.140">
    <property type="entry name" value="Nucleic acid-binding proteins"/>
    <property type="match status" value="1"/>
</dbReference>
<dbReference type="HAMAP" id="MF_00403_B">
    <property type="entry name" value="Ribosomal_uS12_B"/>
    <property type="match status" value="1"/>
</dbReference>
<dbReference type="InterPro" id="IPR012340">
    <property type="entry name" value="NA-bd_OB-fold"/>
</dbReference>
<dbReference type="InterPro" id="IPR006032">
    <property type="entry name" value="Ribosomal_uS12"/>
</dbReference>
<dbReference type="InterPro" id="IPR005679">
    <property type="entry name" value="Ribosomal_uS12_bac"/>
</dbReference>
<dbReference type="NCBIfam" id="TIGR00981">
    <property type="entry name" value="rpsL_bact"/>
    <property type="match status" value="1"/>
</dbReference>
<dbReference type="PANTHER" id="PTHR11652">
    <property type="entry name" value="30S RIBOSOMAL PROTEIN S12 FAMILY MEMBER"/>
    <property type="match status" value="1"/>
</dbReference>
<dbReference type="Pfam" id="PF00164">
    <property type="entry name" value="Ribosom_S12_S23"/>
    <property type="match status" value="1"/>
</dbReference>
<dbReference type="PIRSF" id="PIRSF002133">
    <property type="entry name" value="Ribosomal_S12/S23"/>
    <property type="match status" value="1"/>
</dbReference>
<dbReference type="PRINTS" id="PR01034">
    <property type="entry name" value="RIBOSOMALS12"/>
</dbReference>
<dbReference type="SUPFAM" id="SSF50249">
    <property type="entry name" value="Nucleic acid-binding proteins"/>
    <property type="match status" value="1"/>
</dbReference>
<dbReference type="PROSITE" id="PS00055">
    <property type="entry name" value="RIBOSOMAL_S12"/>
    <property type="match status" value="1"/>
</dbReference>
<keyword id="KW-0488">Methylation</keyword>
<keyword id="KW-1185">Reference proteome</keyword>
<keyword id="KW-0687">Ribonucleoprotein</keyword>
<keyword id="KW-0689">Ribosomal protein</keyword>
<keyword id="KW-0694">RNA-binding</keyword>
<keyword id="KW-0699">rRNA-binding</keyword>
<keyword id="KW-0820">tRNA-binding</keyword>
<accession>Q8D3H4</accession>